<gene>
    <name evidence="1" type="primary">mdh</name>
    <name type="ordered locus">HNE_3218</name>
</gene>
<keyword id="KW-0520">NAD</keyword>
<keyword id="KW-0560">Oxidoreductase</keyword>
<keyword id="KW-1185">Reference proteome</keyword>
<keyword id="KW-0816">Tricarboxylic acid cycle</keyword>
<comment type="function">
    <text evidence="1">Catalyzes the reversible oxidation of malate to oxaloacetate.</text>
</comment>
<comment type="catalytic activity">
    <reaction evidence="1">
        <text>(S)-malate + NAD(+) = oxaloacetate + NADH + H(+)</text>
        <dbReference type="Rhea" id="RHEA:21432"/>
        <dbReference type="ChEBI" id="CHEBI:15378"/>
        <dbReference type="ChEBI" id="CHEBI:15589"/>
        <dbReference type="ChEBI" id="CHEBI:16452"/>
        <dbReference type="ChEBI" id="CHEBI:57540"/>
        <dbReference type="ChEBI" id="CHEBI:57945"/>
        <dbReference type="EC" id="1.1.1.37"/>
    </reaction>
</comment>
<comment type="similarity">
    <text evidence="1">Belongs to the LDH/MDH superfamily. MDH type 3 family.</text>
</comment>
<feature type="chain" id="PRO_1000026476" description="Malate dehydrogenase">
    <location>
        <begin position="1"/>
        <end position="320"/>
    </location>
</feature>
<feature type="active site" description="Proton acceptor" evidence="1">
    <location>
        <position position="176"/>
    </location>
</feature>
<feature type="binding site" evidence="1">
    <location>
        <begin position="10"/>
        <end position="15"/>
    </location>
    <ligand>
        <name>NAD(+)</name>
        <dbReference type="ChEBI" id="CHEBI:57540"/>
    </ligand>
</feature>
<feature type="binding site" evidence="1">
    <location>
        <position position="34"/>
    </location>
    <ligand>
        <name>NAD(+)</name>
        <dbReference type="ChEBI" id="CHEBI:57540"/>
    </ligand>
</feature>
<feature type="binding site" evidence="1">
    <location>
        <position position="83"/>
    </location>
    <ligand>
        <name>substrate</name>
    </ligand>
</feature>
<feature type="binding site" evidence="1">
    <location>
        <position position="89"/>
    </location>
    <ligand>
        <name>substrate</name>
    </ligand>
</feature>
<feature type="binding site" evidence="1">
    <location>
        <position position="96"/>
    </location>
    <ligand>
        <name>NAD(+)</name>
        <dbReference type="ChEBI" id="CHEBI:57540"/>
    </ligand>
</feature>
<feature type="binding site" evidence="1">
    <location>
        <begin position="119"/>
        <end position="121"/>
    </location>
    <ligand>
        <name>NAD(+)</name>
        <dbReference type="ChEBI" id="CHEBI:57540"/>
    </ligand>
</feature>
<feature type="binding site" evidence="1">
    <location>
        <position position="121"/>
    </location>
    <ligand>
        <name>substrate</name>
    </ligand>
</feature>
<feature type="binding site" evidence="1">
    <location>
        <position position="152"/>
    </location>
    <ligand>
        <name>substrate</name>
    </ligand>
</feature>
<evidence type="ECO:0000255" key="1">
    <source>
        <dbReference type="HAMAP-Rule" id="MF_00487"/>
    </source>
</evidence>
<proteinExistence type="inferred from homology"/>
<organism>
    <name type="scientific">Hyphomonas neptunium (strain ATCC 15444)</name>
    <dbReference type="NCBI Taxonomy" id="228405"/>
    <lineage>
        <taxon>Bacteria</taxon>
        <taxon>Pseudomonadati</taxon>
        <taxon>Pseudomonadota</taxon>
        <taxon>Alphaproteobacteria</taxon>
        <taxon>Hyphomonadales</taxon>
        <taxon>Hyphomonadaceae</taxon>
        <taxon>Hyphomonas</taxon>
    </lineage>
</organism>
<accession>Q0BXA0</accession>
<protein>
    <recommendedName>
        <fullName evidence="1">Malate dehydrogenase</fullName>
        <ecNumber evidence="1">1.1.1.37</ecNumber>
    </recommendedName>
</protein>
<name>MDH_HYPNA</name>
<dbReference type="EC" id="1.1.1.37" evidence="1"/>
<dbReference type="EMBL" id="CP000158">
    <property type="protein sequence ID" value="ABI78288.1"/>
    <property type="molecule type" value="Genomic_DNA"/>
</dbReference>
<dbReference type="RefSeq" id="WP_011648189.1">
    <property type="nucleotide sequence ID" value="NC_008358.1"/>
</dbReference>
<dbReference type="SMR" id="Q0BXA0"/>
<dbReference type="STRING" id="228405.HNE_3218"/>
<dbReference type="KEGG" id="hne:HNE_3218"/>
<dbReference type="eggNOG" id="COG0039">
    <property type="taxonomic scope" value="Bacteria"/>
</dbReference>
<dbReference type="HOGENOM" id="CLU_045401_2_1_5"/>
<dbReference type="Proteomes" id="UP000001959">
    <property type="component" value="Chromosome"/>
</dbReference>
<dbReference type="GO" id="GO:0004459">
    <property type="term" value="F:L-lactate dehydrogenase activity"/>
    <property type="evidence" value="ECO:0007669"/>
    <property type="project" value="TreeGrafter"/>
</dbReference>
<dbReference type="GO" id="GO:0030060">
    <property type="term" value="F:L-malate dehydrogenase (NAD+) activity"/>
    <property type="evidence" value="ECO:0007669"/>
    <property type="project" value="UniProtKB-UniRule"/>
</dbReference>
<dbReference type="GO" id="GO:0006089">
    <property type="term" value="P:lactate metabolic process"/>
    <property type="evidence" value="ECO:0007669"/>
    <property type="project" value="TreeGrafter"/>
</dbReference>
<dbReference type="GO" id="GO:0006099">
    <property type="term" value="P:tricarboxylic acid cycle"/>
    <property type="evidence" value="ECO:0007669"/>
    <property type="project" value="UniProtKB-UniRule"/>
</dbReference>
<dbReference type="CDD" id="cd01339">
    <property type="entry name" value="LDH-like_MDH"/>
    <property type="match status" value="1"/>
</dbReference>
<dbReference type="FunFam" id="3.40.50.720:FF:000018">
    <property type="entry name" value="Malate dehydrogenase"/>
    <property type="match status" value="1"/>
</dbReference>
<dbReference type="FunFam" id="3.90.110.10:FF:000004">
    <property type="entry name" value="Malate dehydrogenase"/>
    <property type="match status" value="1"/>
</dbReference>
<dbReference type="Gene3D" id="3.90.110.10">
    <property type="entry name" value="Lactate dehydrogenase/glycoside hydrolase, family 4, C-terminal"/>
    <property type="match status" value="1"/>
</dbReference>
<dbReference type="Gene3D" id="3.40.50.720">
    <property type="entry name" value="NAD(P)-binding Rossmann-like Domain"/>
    <property type="match status" value="1"/>
</dbReference>
<dbReference type="HAMAP" id="MF_00487">
    <property type="entry name" value="Malate_dehydrog_3"/>
    <property type="match status" value="1"/>
</dbReference>
<dbReference type="InterPro" id="IPR001557">
    <property type="entry name" value="L-lactate/malate_DH"/>
</dbReference>
<dbReference type="InterPro" id="IPR022383">
    <property type="entry name" value="Lactate/malate_DH_C"/>
</dbReference>
<dbReference type="InterPro" id="IPR001236">
    <property type="entry name" value="Lactate/malate_DH_N"/>
</dbReference>
<dbReference type="InterPro" id="IPR015955">
    <property type="entry name" value="Lactate_DH/Glyco_Ohase_4_C"/>
</dbReference>
<dbReference type="InterPro" id="IPR011275">
    <property type="entry name" value="Malate_DH_type3"/>
</dbReference>
<dbReference type="InterPro" id="IPR036291">
    <property type="entry name" value="NAD(P)-bd_dom_sf"/>
</dbReference>
<dbReference type="NCBIfam" id="TIGR01763">
    <property type="entry name" value="MalateDH_bact"/>
    <property type="match status" value="1"/>
</dbReference>
<dbReference type="NCBIfam" id="NF004863">
    <property type="entry name" value="PRK06223.1"/>
    <property type="match status" value="1"/>
</dbReference>
<dbReference type="PANTHER" id="PTHR43128">
    <property type="entry name" value="L-2-HYDROXYCARBOXYLATE DEHYDROGENASE (NAD(P)(+))"/>
    <property type="match status" value="1"/>
</dbReference>
<dbReference type="PANTHER" id="PTHR43128:SF16">
    <property type="entry name" value="L-LACTATE DEHYDROGENASE"/>
    <property type="match status" value="1"/>
</dbReference>
<dbReference type="Pfam" id="PF02866">
    <property type="entry name" value="Ldh_1_C"/>
    <property type="match status" value="1"/>
</dbReference>
<dbReference type="Pfam" id="PF00056">
    <property type="entry name" value="Ldh_1_N"/>
    <property type="match status" value="1"/>
</dbReference>
<dbReference type="PIRSF" id="PIRSF000102">
    <property type="entry name" value="Lac_mal_DH"/>
    <property type="match status" value="1"/>
</dbReference>
<dbReference type="PRINTS" id="PR00086">
    <property type="entry name" value="LLDHDRGNASE"/>
</dbReference>
<dbReference type="SUPFAM" id="SSF56327">
    <property type="entry name" value="LDH C-terminal domain-like"/>
    <property type="match status" value="1"/>
</dbReference>
<dbReference type="SUPFAM" id="SSF51735">
    <property type="entry name" value="NAD(P)-binding Rossmann-fold domains"/>
    <property type="match status" value="1"/>
</dbReference>
<reference key="1">
    <citation type="journal article" date="2006" name="J. Bacteriol.">
        <title>Comparative genomic evidence for a close relationship between the dimorphic prosthecate bacteria Hyphomonas neptunium and Caulobacter crescentus.</title>
        <authorList>
            <person name="Badger J.H."/>
            <person name="Hoover T.R."/>
            <person name="Brun Y.V."/>
            <person name="Weiner R.M."/>
            <person name="Laub M.T."/>
            <person name="Alexandre G."/>
            <person name="Mrazek J."/>
            <person name="Ren Q."/>
            <person name="Paulsen I.T."/>
            <person name="Nelson K.E."/>
            <person name="Khouri H.M."/>
            <person name="Radune D."/>
            <person name="Sosa J."/>
            <person name="Dodson R.J."/>
            <person name="Sullivan S.A."/>
            <person name="Rosovitz M.J."/>
            <person name="Madupu R."/>
            <person name="Brinkac L.M."/>
            <person name="Durkin A.S."/>
            <person name="Daugherty S.C."/>
            <person name="Kothari S.P."/>
            <person name="Giglio M.G."/>
            <person name="Zhou L."/>
            <person name="Haft D.H."/>
            <person name="Selengut J.D."/>
            <person name="Davidsen T.M."/>
            <person name="Yang Q."/>
            <person name="Zafar N."/>
            <person name="Ward N.L."/>
        </authorList>
    </citation>
    <scope>NUCLEOTIDE SEQUENCE [LARGE SCALE GENOMIC DNA]</scope>
    <source>
        <strain>ATCC 15444</strain>
    </source>
</reference>
<sequence length="320" mass="33388">MARNKIALIGSGMIGGTLAHVAAREELGDVILFDIAEGLPQGKGLDIAESTPVYGASVNLKGVNDYAGIAGADVCIVTAGVPRKPGMSRDDLLGINLKVMKAVGEGIKAHAPNAFVICITNPLDAMVWALQKFSGLPTEKVVGMAGVLDSSRFAYFLSEKTGVSVADIHAWTLGGHGDDMVPMVRHSTVGGLPLTQLVAQGWMSQAELDAIVERTRKGGGEIVNLLKTGSAYYAPAESAIAMAKSYLADQKRVLPVASYCSGQYGLKDMYVGVPTLIGAGGAEKIVEFDFNADEKAMFDKSVASVNGLIEACKGIDPSLA</sequence>